<feature type="chain" id="PRO_0000161723" description="Phospholipase A2">
    <location>
        <begin position="1"/>
        <end position="134"/>
    </location>
</feature>
<feature type="active site" evidence="3">
    <location>
        <position position="34"/>
    </location>
</feature>
<feature type="active site" evidence="3">
    <location>
        <position position="64"/>
    </location>
</feature>
<feature type="binding site" evidence="1">
    <location>
        <position position="8"/>
    </location>
    <ligand>
        <name>Ca(2+)</name>
        <dbReference type="ChEBI" id="CHEBI:29108"/>
    </ligand>
</feature>
<feature type="binding site" evidence="1">
    <location>
        <position position="10"/>
    </location>
    <ligand>
        <name>Ca(2+)</name>
        <dbReference type="ChEBI" id="CHEBI:29108"/>
    </ligand>
</feature>
<feature type="binding site" evidence="1">
    <location>
        <position position="12"/>
    </location>
    <ligand>
        <name>Ca(2+)</name>
        <dbReference type="ChEBI" id="CHEBI:29108"/>
    </ligand>
</feature>
<feature type="binding site" evidence="1">
    <location>
        <position position="35"/>
    </location>
    <ligand>
        <name>Ca(2+)</name>
        <dbReference type="ChEBI" id="CHEBI:29108"/>
    </ligand>
</feature>
<feature type="glycosylation site" description="N-linked (GlcNAc...) asparagine" evidence="2">
    <location>
        <position position="13"/>
    </location>
</feature>
<feature type="disulfide bond" evidence="1">
    <location>
        <begin position="9"/>
        <end position="31"/>
    </location>
</feature>
<feature type="disulfide bond" evidence="1">
    <location>
        <begin position="30"/>
        <end position="70"/>
    </location>
</feature>
<feature type="disulfide bond" evidence="1">
    <location>
        <begin position="37"/>
        <end position="63"/>
    </location>
</feature>
<feature type="disulfide bond" evidence="1">
    <location>
        <begin position="61"/>
        <end position="95"/>
    </location>
</feature>
<feature type="disulfide bond" evidence="1">
    <location>
        <begin position="105"/>
        <end position="113"/>
    </location>
</feature>
<evidence type="ECO:0000250" key="1"/>
<evidence type="ECO:0000255" key="2"/>
<evidence type="ECO:0000255" key="3">
    <source>
        <dbReference type="PROSITE-ProRule" id="PRU10035"/>
    </source>
</evidence>
<evidence type="ECO:0000305" key="4"/>
<keyword id="KW-0020">Allergen</keyword>
<keyword id="KW-0106">Calcium</keyword>
<keyword id="KW-0903">Direct protein sequencing</keyword>
<keyword id="KW-1015">Disulfide bond</keyword>
<keyword id="KW-0325">Glycoprotein</keyword>
<keyword id="KW-0378">Hydrolase</keyword>
<keyword id="KW-0442">Lipid degradation</keyword>
<keyword id="KW-0443">Lipid metabolism</keyword>
<keyword id="KW-0479">Metal-binding</keyword>
<keyword id="KW-0964">Secreted</keyword>
<accession>Q7M4I5</accession>
<organism>
    <name type="scientific">Apis dorsata</name>
    <name type="common">Giant honeybee</name>
    <dbReference type="NCBI Taxonomy" id="7462"/>
    <lineage>
        <taxon>Eukaryota</taxon>
        <taxon>Metazoa</taxon>
        <taxon>Ecdysozoa</taxon>
        <taxon>Arthropoda</taxon>
        <taxon>Hexapoda</taxon>
        <taxon>Insecta</taxon>
        <taxon>Pterygota</taxon>
        <taxon>Neoptera</taxon>
        <taxon>Endopterygota</taxon>
        <taxon>Hymenoptera</taxon>
        <taxon>Apocrita</taxon>
        <taxon>Aculeata</taxon>
        <taxon>Apoidea</taxon>
        <taxon>Anthophila</taxon>
        <taxon>Apidae</taxon>
        <taxon>Apis</taxon>
    </lineage>
</organism>
<reference key="1">
    <citation type="submission" date="1999-07" db="PIR data bank">
        <authorList>
            <person name="Hoffman D.R."/>
            <person name="Schmidt J.O."/>
        </authorList>
    </citation>
    <scope>PROTEIN SEQUENCE</scope>
    <source>
        <tissue>Venom</tissue>
    </source>
</reference>
<dbReference type="EC" id="3.1.1.4"/>
<dbReference type="PIR" id="B59055">
    <property type="entry name" value="B59055"/>
</dbReference>
<dbReference type="SMR" id="Q7M4I5"/>
<dbReference type="Allergome" id="1282">
    <property type="allergen name" value="Api d 1"/>
</dbReference>
<dbReference type="Allergome" id="3085">
    <property type="allergen name" value="Api d 1.0101"/>
</dbReference>
<dbReference type="GO" id="GO:0005576">
    <property type="term" value="C:extracellular region"/>
    <property type="evidence" value="ECO:0007669"/>
    <property type="project" value="UniProtKB-SubCell"/>
</dbReference>
<dbReference type="GO" id="GO:0046872">
    <property type="term" value="F:metal ion binding"/>
    <property type="evidence" value="ECO:0007669"/>
    <property type="project" value="UniProtKB-KW"/>
</dbReference>
<dbReference type="GO" id="GO:0004623">
    <property type="term" value="F:phospholipase A2 activity"/>
    <property type="evidence" value="ECO:0007669"/>
    <property type="project" value="UniProtKB-EC"/>
</dbReference>
<dbReference type="GO" id="GO:0050482">
    <property type="term" value="P:arachidonate secretion"/>
    <property type="evidence" value="ECO:0007669"/>
    <property type="project" value="InterPro"/>
</dbReference>
<dbReference type="GO" id="GO:0016042">
    <property type="term" value="P:lipid catabolic process"/>
    <property type="evidence" value="ECO:0007669"/>
    <property type="project" value="UniProtKB-KW"/>
</dbReference>
<dbReference type="GO" id="GO:0006644">
    <property type="term" value="P:phospholipid metabolic process"/>
    <property type="evidence" value="ECO:0007669"/>
    <property type="project" value="InterPro"/>
</dbReference>
<dbReference type="CDD" id="cd04704">
    <property type="entry name" value="PLA2_bee_venom_like"/>
    <property type="match status" value="1"/>
</dbReference>
<dbReference type="FunFam" id="1.20.90.10:FF:000002">
    <property type="entry name" value="Phospholipase A2 group III"/>
    <property type="match status" value="1"/>
</dbReference>
<dbReference type="Gene3D" id="1.20.90.10">
    <property type="entry name" value="Phospholipase A2 domain"/>
    <property type="match status" value="1"/>
</dbReference>
<dbReference type="InterPro" id="IPR016090">
    <property type="entry name" value="PLipase_A2_dom"/>
</dbReference>
<dbReference type="InterPro" id="IPR036444">
    <property type="entry name" value="PLipase_A2_dom_sf"/>
</dbReference>
<dbReference type="InterPro" id="IPR033113">
    <property type="entry name" value="PLipase_A2_His_AS"/>
</dbReference>
<dbReference type="PANTHER" id="PTHR12253">
    <property type="entry name" value="RH14732P"/>
    <property type="match status" value="1"/>
</dbReference>
<dbReference type="Pfam" id="PF05826">
    <property type="entry name" value="Phospholip_A2_2"/>
    <property type="match status" value="1"/>
</dbReference>
<dbReference type="SMART" id="SM00085">
    <property type="entry name" value="PA2c"/>
    <property type="match status" value="1"/>
</dbReference>
<dbReference type="SUPFAM" id="SSF48619">
    <property type="entry name" value="Phospholipase A2, PLA2"/>
    <property type="match status" value="1"/>
</dbReference>
<dbReference type="PROSITE" id="PS00118">
    <property type="entry name" value="PA2_HIS"/>
    <property type="match status" value="1"/>
</dbReference>
<protein>
    <recommendedName>
        <fullName>Phospholipase A2</fullName>
        <shortName>PLA2</shortName>
        <ecNumber>3.1.1.4</ecNumber>
    </recommendedName>
    <alternativeName>
        <fullName>Phosphatidylcholine 2-acylhydrolase</fullName>
    </alternativeName>
    <allergenName>Api d 1</allergenName>
</protein>
<proteinExistence type="evidence at protein level"/>
<comment type="function">
    <text>PLA2 catalyzes the calcium-dependent hydrolysis of the 2-acyl groups in 3-sn-phosphoglycerides.</text>
</comment>
<comment type="catalytic activity">
    <reaction evidence="3">
        <text>a 1,2-diacyl-sn-glycero-3-phosphocholine + H2O = a 1-acyl-sn-glycero-3-phosphocholine + a fatty acid + H(+)</text>
        <dbReference type="Rhea" id="RHEA:15801"/>
        <dbReference type="ChEBI" id="CHEBI:15377"/>
        <dbReference type="ChEBI" id="CHEBI:15378"/>
        <dbReference type="ChEBI" id="CHEBI:28868"/>
        <dbReference type="ChEBI" id="CHEBI:57643"/>
        <dbReference type="ChEBI" id="CHEBI:58168"/>
        <dbReference type="EC" id="3.1.1.4"/>
    </reaction>
</comment>
<comment type="cofactor">
    <cofactor evidence="1">
        <name>Ca(2+)</name>
        <dbReference type="ChEBI" id="CHEBI:29108"/>
    </cofactor>
    <text evidence="1">Binds 1 Ca(2+) ion.</text>
</comment>
<comment type="subcellular location">
    <subcellularLocation>
        <location>Secreted</location>
    </subcellularLocation>
</comment>
<comment type="tissue specificity">
    <text>Expressed by the venom gland.</text>
</comment>
<comment type="allergen">
    <text evidence="1">Causes an allergic reaction in human.</text>
</comment>
<comment type="similarity">
    <text evidence="4">Belongs to the phospholipase A2 family. Group III subfamily.</text>
</comment>
<name>PA2_APIDO</name>
<sequence length="134" mass="15246">IIYPGTLWCGHGNVSSSPDELGRFKHTDSCCRSHDMCPDVMSAGESKHGLTNTASHTRLSCDCDDKFYDCLKNSSDTISSYFVGEMYFNILDTKCYKLEHPVTGCGKRTEGRCLNYTVDKSKPKVYQWFDLRKY</sequence>